<gene>
    <name evidence="5" type="primary">GRF12</name>
    <name evidence="7" type="ordered locus">At1g26480</name>
    <name evidence="8" type="ORF">T1K7.15</name>
</gene>
<dbReference type="EMBL" id="AF335544">
    <property type="protein sequence ID" value="AAK11271.1"/>
    <property type="molecule type" value="mRNA"/>
</dbReference>
<dbReference type="EMBL" id="AC013427">
    <property type="protein sequence ID" value="AAF98570.1"/>
    <property type="molecule type" value="Genomic_DNA"/>
</dbReference>
<dbReference type="EMBL" id="CP002684">
    <property type="protein sequence ID" value="AEE30696.1"/>
    <property type="molecule type" value="Genomic_DNA"/>
</dbReference>
<dbReference type="EMBL" id="AK117907">
    <property type="protein sequence ID" value="BAC42545.1"/>
    <property type="molecule type" value="mRNA"/>
</dbReference>
<dbReference type="EMBL" id="BT006230">
    <property type="protein sequence ID" value="AAP12879.1"/>
    <property type="molecule type" value="mRNA"/>
</dbReference>
<dbReference type="EMBL" id="AY085338">
    <property type="protein sequence ID" value="AAM62569.1"/>
    <property type="status" value="ALT_INIT"/>
    <property type="molecule type" value="mRNA"/>
</dbReference>
<dbReference type="PIR" id="F86391">
    <property type="entry name" value="F86391"/>
</dbReference>
<dbReference type="RefSeq" id="NP_564249.1">
    <property type="nucleotide sequence ID" value="NM_102411.3"/>
</dbReference>
<dbReference type="SMR" id="Q9C5W6"/>
<dbReference type="BioGRID" id="24425">
    <property type="interactions" value="12"/>
</dbReference>
<dbReference type="FunCoup" id="Q9C5W6">
    <property type="interactions" value="427"/>
</dbReference>
<dbReference type="IntAct" id="Q9C5W6">
    <property type="interactions" value="2"/>
</dbReference>
<dbReference type="STRING" id="3702.Q9C5W6"/>
<dbReference type="iPTMnet" id="Q9C5W6"/>
<dbReference type="PaxDb" id="3702-AT1G26480.1"/>
<dbReference type="ProteomicsDB" id="245147"/>
<dbReference type="EnsemblPlants" id="AT1G26480.1">
    <property type="protein sequence ID" value="AT1G26480.1"/>
    <property type="gene ID" value="AT1G26480"/>
</dbReference>
<dbReference type="GeneID" id="839189"/>
<dbReference type="Gramene" id="AT1G26480.1">
    <property type="protein sequence ID" value="AT1G26480.1"/>
    <property type="gene ID" value="AT1G26480"/>
</dbReference>
<dbReference type="KEGG" id="ath:AT1G26480"/>
<dbReference type="Araport" id="AT1G26480"/>
<dbReference type="TAIR" id="AT1G26480">
    <property type="gene designation" value="GRF12"/>
</dbReference>
<dbReference type="eggNOG" id="KOG0841">
    <property type="taxonomic scope" value="Eukaryota"/>
</dbReference>
<dbReference type="HOGENOM" id="CLU_058290_0_1_1"/>
<dbReference type="InParanoid" id="Q9C5W6"/>
<dbReference type="OMA" id="MIKNYRQ"/>
<dbReference type="PhylomeDB" id="Q9C5W6"/>
<dbReference type="PRO" id="PR:Q9C5W6"/>
<dbReference type="Proteomes" id="UP000006548">
    <property type="component" value="Chromosome 1"/>
</dbReference>
<dbReference type="ExpressionAtlas" id="Q9C5W6">
    <property type="expression patterns" value="baseline and differential"/>
</dbReference>
<dbReference type="GO" id="GO:0005737">
    <property type="term" value="C:cytoplasm"/>
    <property type="evidence" value="ECO:0007669"/>
    <property type="project" value="UniProtKB-SubCell"/>
</dbReference>
<dbReference type="GO" id="GO:0005634">
    <property type="term" value="C:nucleus"/>
    <property type="evidence" value="ECO:0007005"/>
    <property type="project" value="TAIR"/>
</dbReference>
<dbReference type="FunFam" id="1.20.190.20:FF:000002">
    <property type="entry name" value="14-3-3 protein epsilon"/>
    <property type="match status" value="1"/>
</dbReference>
<dbReference type="Gene3D" id="1.20.190.20">
    <property type="entry name" value="14-3-3 domain"/>
    <property type="match status" value="1"/>
</dbReference>
<dbReference type="InterPro" id="IPR000308">
    <property type="entry name" value="14-3-3"/>
</dbReference>
<dbReference type="InterPro" id="IPR023409">
    <property type="entry name" value="14-3-3_CS"/>
</dbReference>
<dbReference type="InterPro" id="IPR036815">
    <property type="entry name" value="14-3-3_dom_sf"/>
</dbReference>
<dbReference type="InterPro" id="IPR023410">
    <property type="entry name" value="14-3-3_domain"/>
</dbReference>
<dbReference type="PANTHER" id="PTHR18860">
    <property type="entry name" value="14-3-3 PROTEIN"/>
    <property type="match status" value="1"/>
</dbReference>
<dbReference type="Pfam" id="PF00244">
    <property type="entry name" value="14-3-3"/>
    <property type="match status" value="1"/>
</dbReference>
<dbReference type="PIRSF" id="PIRSF000868">
    <property type="entry name" value="14-3-3"/>
    <property type="match status" value="1"/>
</dbReference>
<dbReference type="PRINTS" id="PR00305">
    <property type="entry name" value="1433ZETA"/>
</dbReference>
<dbReference type="SMART" id="SM00101">
    <property type="entry name" value="14_3_3"/>
    <property type="match status" value="1"/>
</dbReference>
<dbReference type="SUPFAM" id="SSF48445">
    <property type="entry name" value="14-3-3 protein"/>
    <property type="match status" value="1"/>
</dbReference>
<dbReference type="PROSITE" id="PS00796">
    <property type="entry name" value="1433_1"/>
    <property type="match status" value="1"/>
</dbReference>
<dbReference type="PROSITE" id="PS00797">
    <property type="entry name" value="1433_2"/>
    <property type="match status" value="1"/>
</dbReference>
<reference key="1">
    <citation type="journal article" date="2001" name="Plant Physiol.">
        <title>Data mining the Arabidopsis genome reveals fifteen 14-3-3 genes. Expression is demonstrated for two out of five novel genes.</title>
        <authorList>
            <person name="Rosenquist M."/>
            <person name="Alsterfjord M."/>
            <person name="Larsson C."/>
            <person name="Sommarin M."/>
        </authorList>
    </citation>
    <scope>NUCLEOTIDE SEQUENCE [MRNA]</scope>
    <scope>TISSUE SPECIFICITY</scope>
    <scope>GENE FAMILY</scope>
    <scope>NOMENCLATURE</scope>
</reference>
<reference key="2">
    <citation type="journal article" date="2000" name="Nature">
        <title>Sequence and analysis of chromosome 1 of the plant Arabidopsis thaliana.</title>
        <authorList>
            <person name="Theologis A."/>
            <person name="Ecker J.R."/>
            <person name="Palm C.J."/>
            <person name="Federspiel N.A."/>
            <person name="Kaul S."/>
            <person name="White O."/>
            <person name="Alonso J."/>
            <person name="Altafi H."/>
            <person name="Araujo R."/>
            <person name="Bowman C.L."/>
            <person name="Brooks S.Y."/>
            <person name="Buehler E."/>
            <person name="Chan A."/>
            <person name="Chao Q."/>
            <person name="Chen H."/>
            <person name="Cheuk R.F."/>
            <person name="Chin C.W."/>
            <person name="Chung M.K."/>
            <person name="Conn L."/>
            <person name="Conway A.B."/>
            <person name="Conway A.R."/>
            <person name="Creasy T.H."/>
            <person name="Dewar K."/>
            <person name="Dunn P."/>
            <person name="Etgu P."/>
            <person name="Feldblyum T.V."/>
            <person name="Feng J.-D."/>
            <person name="Fong B."/>
            <person name="Fujii C.Y."/>
            <person name="Gill J.E."/>
            <person name="Goldsmith A.D."/>
            <person name="Haas B."/>
            <person name="Hansen N.F."/>
            <person name="Hughes B."/>
            <person name="Huizar L."/>
            <person name="Hunter J.L."/>
            <person name="Jenkins J."/>
            <person name="Johnson-Hopson C."/>
            <person name="Khan S."/>
            <person name="Khaykin E."/>
            <person name="Kim C.J."/>
            <person name="Koo H.L."/>
            <person name="Kremenetskaia I."/>
            <person name="Kurtz D.B."/>
            <person name="Kwan A."/>
            <person name="Lam B."/>
            <person name="Langin-Hooper S."/>
            <person name="Lee A."/>
            <person name="Lee J.M."/>
            <person name="Lenz C.A."/>
            <person name="Li J.H."/>
            <person name="Li Y.-P."/>
            <person name="Lin X."/>
            <person name="Liu S.X."/>
            <person name="Liu Z.A."/>
            <person name="Luros J.S."/>
            <person name="Maiti R."/>
            <person name="Marziali A."/>
            <person name="Militscher J."/>
            <person name="Miranda M."/>
            <person name="Nguyen M."/>
            <person name="Nierman W.C."/>
            <person name="Osborne B.I."/>
            <person name="Pai G."/>
            <person name="Peterson J."/>
            <person name="Pham P.K."/>
            <person name="Rizzo M."/>
            <person name="Rooney T."/>
            <person name="Rowley D."/>
            <person name="Sakano H."/>
            <person name="Salzberg S.L."/>
            <person name="Schwartz J.R."/>
            <person name="Shinn P."/>
            <person name="Southwick A.M."/>
            <person name="Sun H."/>
            <person name="Tallon L.J."/>
            <person name="Tambunga G."/>
            <person name="Toriumi M.J."/>
            <person name="Town C.D."/>
            <person name="Utterback T."/>
            <person name="Van Aken S."/>
            <person name="Vaysberg M."/>
            <person name="Vysotskaia V.S."/>
            <person name="Walker M."/>
            <person name="Wu D."/>
            <person name="Yu G."/>
            <person name="Fraser C.M."/>
            <person name="Venter J.C."/>
            <person name="Davis R.W."/>
        </authorList>
    </citation>
    <scope>NUCLEOTIDE SEQUENCE [LARGE SCALE GENOMIC DNA]</scope>
    <source>
        <strain>cv. Columbia</strain>
    </source>
</reference>
<reference key="3">
    <citation type="journal article" date="2017" name="Plant J.">
        <title>Araport11: a complete reannotation of the Arabidopsis thaliana reference genome.</title>
        <authorList>
            <person name="Cheng C.Y."/>
            <person name="Krishnakumar V."/>
            <person name="Chan A.P."/>
            <person name="Thibaud-Nissen F."/>
            <person name="Schobel S."/>
            <person name="Town C.D."/>
        </authorList>
    </citation>
    <scope>GENOME REANNOTATION</scope>
    <source>
        <strain>cv. Columbia</strain>
    </source>
</reference>
<reference key="4">
    <citation type="journal article" date="2002" name="Science">
        <title>Functional annotation of a full-length Arabidopsis cDNA collection.</title>
        <authorList>
            <person name="Seki M."/>
            <person name="Narusaka M."/>
            <person name="Kamiya A."/>
            <person name="Ishida J."/>
            <person name="Satou M."/>
            <person name="Sakurai T."/>
            <person name="Nakajima M."/>
            <person name="Enju A."/>
            <person name="Akiyama K."/>
            <person name="Oono Y."/>
            <person name="Muramatsu M."/>
            <person name="Hayashizaki Y."/>
            <person name="Kawai J."/>
            <person name="Carninci P."/>
            <person name="Itoh M."/>
            <person name="Ishii Y."/>
            <person name="Arakawa T."/>
            <person name="Shibata K."/>
            <person name="Shinagawa A."/>
            <person name="Shinozaki K."/>
        </authorList>
    </citation>
    <scope>NUCLEOTIDE SEQUENCE [LARGE SCALE MRNA]</scope>
    <source>
        <strain>cv. Columbia</strain>
    </source>
</reference>
<reference key="5">
    <citation type="journal article" date="2003" name="Science">
        <title>Empirical analysis of transcriptional activity in the Arabidopsis genome.</title>
        <authorList>
            <person name="Yamada K."/>
            <person name="Lim J."/>
            <person name="Dale J.M."/>
            <person name="Chen H."/>
            <person name="Shinn P."/>
            <person name="Palm C.J."/>
            <person name="Southwick A.M."/>
            <person name="Wu H.C."/>
            <person name="Kim C.J."/>
            <person name="Nguyen M."/>
            <person name="Pham P.K."/>
            <person name="Cheuk R.F."/>
            <person name="Karlin-Newmann G."/>
            <person name="Liu S.X."/>
            <person name="Lam B."/>
            <person name="Sakano H."/>
            <person name="Wu T."/>
            <person name="Yu G."/>
            <person name="Miranda M."/>
            <person name="Quach H.L."/>
            <person name="Tripp M."/>
            <person name="Chang C.H."/>
            <person name="Lee J.M."/>
            <person name="Toriumi M.J."/>
            <person name="Chan M.M."/>
            <person name="Tang C.C."/>
            <person name="Onodera C.S."/>
            <person name="Deng J.M."/>
            <person name="Akiyama K."/>
            <person name="Ansari Y."/>
            <person name="Arakawa T."/>
            <person name="Banh J."/>
            <person name="Banno F."/>
            <person name="Bowser L."/>
            <person name="Brooks S.Y."/>
            <person name="Carninci P."/>
            <person name="Chao Q."/>
            <person name="Choy N."/>
            <person name="Enju A."/>
            <person name="Goldsmith A.D."/>
            <person name="Gurjal M."/>
            <person name="Hansen N.F."/>
            <person name="Hayashizaki Y."/>
            <person name="Johnson-Hopson C."/>
            <person name="Hsuan V.W."/>
            <person name="Iida K."/>
            <person name="Karnes M."/>
            <person name="Khan S."/>
            <person name="Koesema E."/>
            <person name="Ishida J."/>
            <person name="Jiang P.X."/>
            <person name="Jones T."/>
            <person name="Kawai J."/>
            <person name="Kamiya A."/>
            <person name="Meyers C."/>
            <person name="Nakajima M."/>
            <person name="Narusaka M."/>
            <person name="Seki M."/>
            <person name="Sakurai T."/>
            <person name="Satou M."/>
            <person name="Tamse R."/>
            <person name="Vaysberg M."/>
            <person name="Wallender E.K."/>
            <person name="Wong C."/>
            <person name="Yamamura Y."/>
            <person name="Yuan S."/>
            <person name="Shinozaki K."/>
            <person name="Davis R.W."/>
            <person name="Theologis A."/>
            <person name="Ecker J.R."/>
        </authorList>
    </citation>
    <scope>NUCLEOTIDE SEQUENCE [LARGE SCALE MRNA]</scope>
    <source>
        <strain>cv. Columbia</strain>
    </source>
</reference>
<reference key="6">
    <citation type="submission" date="2002-03" db="EMBL/GenBank/DDBJ databases">
        <title>Full-length cDNA from Arabidopsis thaliana.</title>
        <authorList>
            <person name="Brover V.V."/>
            <person name="Troukhan M.E."/>
            <person name="Alexandrov N.A."/>
            <person name="Lu Y.-P."/>
            <person name="Flavell R.B."/>
            <person name="Feldmann K.A."/>
        </authorList>
    </citation>
    <scope>NUCLEOTIDE SEQUENCE [LARGE SCALE MRNA]</scope>
</reference>
<sequence>MSSSGSDKERETFVYMAKLSEQAERYDEMVETMKKVARVNSELTVEERNLLSVGYKNVIGARRASWRIMSSIEQKEESKGNESNVKQIKGYRQKVEDELANICQDILTIIDQHLIPHATSGEATVFYYKMKGDYYRYLAEFKTEQERKEAAEQSLKGYEAATQAASTELPSTHPIRLGLALNFSVFYYEIMNSPERACHLAKQAFDEAIAELDTLSEESYKDSTLIMQLLRDNLTLWTSDLPEDGGEDNIKTEESKQEQAKPADATEN</sequence>
<keyword id="KW-0963">Cytoplasm</keyword>
<keyword id="KW-0539">Nucleus</keyword>
<keyword id="KW-0597">Phosphoprotein</keyword>
<keyword id="KW-1185">Reference proteome</keyword>
<comment type="function">
    <text evidence="1">Is associated with a DNA binding complex that binds to the G box, a well-characterized cis-acting DNA regulatory element found in plant genes.</text>
</comment>
<comment type="subcellular location">
    <subcellularLocation>
        <location evidence="2">Nucleus</location>
    </subcellularLocation>
    <subcellularLocation>
        <location evidence="2">Cytoplasm</location>
    </subcellularLocation>
    <text evidence="2">Translocates from the cytosol to the nucleus when phosphorylated.</text>
</comment>
<comment type="tissue specificity">
    <text evidence="4">Expressed in flowers.</text>
</comment>
<comment type="similarity">
    <text evidence="6">Belongs to the 14-3-3 family.</text>
</comment>
<comment type="sequence caution" evidence="6">
    <conflict type="erroneous initiation">
        <sequence resource="EMBL-CDS" id="AAM62569"/>
    </conflict>
    <text>Truncated N-terminus.</text>
</comment>
<proteinExistence type="evidence at transcript level"/>
<evidence type="ECO:0000250" key="1"/>
<evidence type="ECO:0000250" key="2">
    <source>
        <dbReference type="UniProtKB" id="P48349"/>
    </source>
</evidence>
<evidence type="ECO:0000256" key="3">
    <source>
        <dbReference type="SAM" id="MobiDB-lite"/>
    </source>
</evidence>
<evidence type="ECO:0000269" key="4">
    <source>
    </source>
</evidence>
<evidence type="ECO:0000303" key="5">
    <source>
    </source>
</evidence>
<evidence type="ECO:0000305" key="6"/>
<evidence type="ECO:0000312" key="7">
    <source>
        <dbReference type="Araport" id="AT1G26480"/>
    </source>
</evidence>
<evidence type="ECO:0000312" key="8">
    <source>
        <dbReference type="EMBL" id="AAF98570.1"/>
    </source>
</evidence>
<organism>
    <name type="scientific">Arabidopsis thaliana</name>
    <name type="common">Mouse-ear cress</name>
    <dbReference type="NCBI Taxonomy" id="3702"/>
    <lineage>
        <taxon>Eukaryota</taxon>
        <taxon>Viridiplantae</taxon>
        <taxon>Streptophyta</taxon>
        <taxon>Embryophyta</taxon>
        <taxon>Tracheophyta</taxon>
        <taxon>Spermatophyta</taxon>
        <taxon>Magnoliopsida</taxon>
        <taxon>eudicotyledons</taxon>
        <taxon>Gunneridae</taxon>
        <taxon>Pentapetalae</taxon>
        <taxon>rosids</taxon>
        <taxon>malvids</taxon>
        <taxon>Brassicales</taxon>
        <taxon>Brassicaceae</taxon>
        <taxon>Camelineae</taxon>
        <taxon>Arabidopsis</taxon>
    </lineage>
</organism>
<protein>
    <recommendedName>
        <fullName evidence="5">14-3-3-like protein GF14 iota</fullName>
    </recommendedName>
    <alternativeName>
        <fullName evidence="5">General regulatory factor 12</fullName>
    </alternativeName>
</protein>
<feature type="chain" id="PRO_0000058674" description="14-3-3-like protein GF14 iota">
    <location>
        <begin position="1"/>
        <end position="268"/>
    </location>
</feature>
<feature type="region of interest" description="Disordered" evidence="3">
    <location>
        <begin position="240"/>
        <end position="268"/>
    </location>
</feature>
<feature type="compositionally biased region" description="Basic and acidic residues" evidence="3">
    <location>
        <begin position="248"/>
        <end position="261"/>
    </location>
</feature>
<feature type="modified residue" description="Phosphoserine" evidence="2">
    <location>
        <position position="70"/>
    </location>
</feature>
<feature type="modified residue" description="Phosphoserine" evidence="2">
    <location>
        <position position="193"/>
    </location>
</feature>
<feature type="modified residue" description="Phosphothreonine" evidence="2">
    <location>
        <position position="214"/>
    </location>
</feature>
<feature type="sequence conflict" description="In Ref. 2; AAF98570." evidence="6" ref="2">
    <original>N</original>
    <variation>VVIHFKMRTDQRAWKLNEI</variation>
    <location>
        <position position="268"/>
    </location>
</feature>
<name>14312_ARATH</name>
<accession>Q9C5W6</accession>
<accession>Q541X6</accession>
<accession>Q8LEN1</accession>
<accession>Q9FZD3</accession>